<proteinExistence type="inferred from homology"/>
<reference key="1">
    <citation type="submission" date="2007-02" db="EMBL/GenBank/DDBJ databases">
        <title>Complete sequence of Mycobacterium sp. JLS.</title>
        <authorList>
            <consortium name="US DOE Joint Genome Institute"/>
            <person name="Copeland A."/>
            <person name="Lucas S."/>
            <person name="Lapidus A."/>
            <person name="Barry K."/>
            <person name="Detter J.C."/>
            <person name="Glavina del Rio T."/>
            <person name="Hammon N."/>
            <person name="Israni S."/>
            <person name="Dalin E."/>
            <person name="Tice H."/>
            <person name="Pitluck S."/>
            <person name="Chain P."/>
            <person name="Malfatti S."/>
            <person name="Shin M."/>
            <person name="Vergez L."/>
            <person name="Schmutz J."/>
            <person name="Larimer F."/>
            <person name="Land M."/>
            <person name="Hauser L."/>
            <person name="Kyrpides N."/>
            <person name="Mikhailova N."/>
            <person name="Miller C.D."/>
            <person name="Anderson A.J."/>
            <person name="Sims R.C."/>
            <person name="Richardson P."/>
        </authorList>
    </citation>
    <scope>NUCLEOTIDE SEQUENCE [LARGE SCALE GENOMIC DNA]</scope>
    <source>
        <strain>JLS</strain>
    </source>
</reference>
<dbReference type="EC" id="3.5.1.5" evidence="1"/>
<dbReference type="EMBL" id="CP000580">
    <property type="protein sequence ID" value="ABN98614.1"/>
    <property type="molecule type" value="Genomic_DNA"/>
</dbReference>
<dbReference type="SMR" id="A3Q0D7"/>
<dbReference type="KEGG" id="mjl:Mjls_2834"/>
<dbReference type="HOGENOM" id="CLU_145825_1_0_11"/>
<dbReference type="BioCyc" id="MSP164757:G1G8C-2853-MONOMER"/>
<dbReference type="UniPathway" id="UPA00258">
    <property type="reaction ID" value="UER00370"/>
</dbReference>
<dbReference type="GO" id="GO:0005737">
    <property type="term" value="C:cytoplasm"/>
    <property type="evidence" value="ECO:0007669"/>
    <property type="project" value="UniProtKB-SubCell"/>
</dbReference>
<dbReference type="GO" id="GO:0016151">
    <property type="term" value="F:nickel cation binding"/>
    <property type="evidence" value="ECO:0007669"/>
    <property type="project" value="InterPro"/>
</dbReference>
<dbReference type="GO" id="GO:0009039">
    <property type="term" value="F:urease activity"/>
    <property type="evidence" value="ECO:0007669"/>
    <property type="project" value="UniProtKB-UniRule"/>
</dbReference>
<dbReference type="GO" id="GO:0043419">
    <property type="term" value="P:urea catabolic process"/>
    <property type="evidence" value="ECO:0007669"/>
    <property type="project" value="UniProtKB-UniRule"/>
</dbReference>
<dbReference type="CDD" id="cd00390">
    <property type="entry name" value="Urease_gamma"/>
    <property type="match status" value="1"/>
</dbReference>
<dbReference type="Gene3D" id="3.30.280.10">
    <property type="entry name" value="Urease, gamma-like subunit"/>
    <property type="match status" value="1"/>
</dbReference>
<dbReference type="HAMAP" id="MF_00739">
    <property type="entry name" value="Urease_gamma"/>
    <property type="match status" value="1"/>
</dbReference>
<dbReference type="InterPro" id="IPR012010">
    <property type="entry name" value="Urease_gamma"/>
</dbReference>
<dbReference type="InterPro" id="IPR002026">
    <property type="entry name" value="Urease_gamma/gamma-beta_su"/>
</dbReference>
<dbReference type="InterPro" id="IPR036463">
    <property type="entry name" value="Urease_gamma_sf"/>
</dbReference>
<dbReference type="InterPro" id="IPR050069">
    <property type="entry name" value="Urease_subunit"/>
</dbReference>
<dbReference type="NCBIfam" id="NF009712">
    <property type="entry name" value="PRK13241.1"/>
    <property type="match status" value="1"/>
</dbReference>
<dbReference type="NCBIfam" id="TIGR00193">
    <property type="entry name" value="urease_gam"/>
    <property type="match status" value="1"/>
</dbReference>
<dbReference type="PANTHER" id="PTHR33569">
    <property type="entry name" value="UREASE"/>
    <property type="match status" value="1"/>
</dbReference>
<dbReference type="PANTHER" id="PTHR33569:SF1">
    <property type="entry name" value="UREASE"/>
    <property type="match status" value="1"/>
</dbReference>
<dbReference type="Pfam" id="PF00547">
    <property type="entry name" value="Urease_gamma"/>
    <property type="match status" value="1"/>
</dbReference>
<dbReference type="PIRSF" id="PIRSF001223">
    <property type="entry name" value="Urease_gamma"/>
    <property type="match status" value="1"/>
</dbReference>
<dbReference type="SUPFAM" id="SSF54111">
    <property type="entry name" value="Urease, gamma-subunit"/>
    <property type="match status" value="1"/>
</dbReference>
<accession>A3Q0D7</accession>
<keyword id="KW-0963">Cytoplasm</keyword>
<keyword id="KW-0378">Hydrolase</keyword>
<feature type="chain" id="PRO_1000046339" description="Urease subunit gamma">
    <location>
        <begin position="1"/>
        <end position="100"/>
    </location>
</feature>
<sequence length="100" mass="11179">MRLTPHEQDRLLISYAADLARRRRARGLRLNHPEAVAVITDHLLEGARDGRTVAELMVSGRDVLGRDDVMEGVPEMLHDVQVEATFPDGTKLVTVHHPIP</sequence>
<organism>
    <name type="scientific">Mycobacterium sp. (strain JLS)</name>
    <dbReference type="NCBI Taxonomy" id="164757"/>
    <lineage>
        <taxon>Bacteria</taxon>
        <taxon>Bacillati</taxon>
        <taxon>Actinomycetota</taxon>
        <taxon>Actinomycetes</taxon>
        <taxon>Mycobacteriales</taxon>
        <taxon>Mycobacteriaceae</taxon>
        <taxon>Mycobacterium</taxon>
    </lineage>
</organism>
<gene>
    <name evidence="1" type="primary">ureA</name>
    <name type="ordered locus">Mjls_2834</name>
</gene>
<name>URE3_MYCSJ</name>
<evidence type="ECO:0000255" key="1">
    <source>
        <dbReference type="HAMAP-Rule" id="MF_00739"/>
    </source>
</evidence>
<protein>
    <recommendedName>
        <fullName evidence="1">Urease subunit gamma</fullName>
        <ecNumber evidence="1">3.5.1.5</ecNumber>
    </recommendedName>
    <alternativeName>
        <fullName evidence="1">Urea amidohydrolase subunit gamma</fullName>
    </alternativeName>
</protein>
<comment type="catalytic activity">
    <reaction evidence="1">
        <text>urea + 2 H2O + H(+) = hydrogencarbonate + 2 NH4(+)</text>
        <dbReference type="Rhea" id="RHEA:20557"/>
        <dbReference type="ChEBI" id="CHEBI:15377"/>
        <dbReference type="ChEBI" id="CHEBI:15378"/>
        <dbReference type="ChEBI" id="CHEBI:16199"/>
        <dbReference type="ChEBI" id="CHEBI:17544"/>
        <dbReference type="ChEBI" id="CHEBI:28938"/>
        <dbReference type="EC" id="3.5.1.5"/>
    </reaction>
</comment>
<comment type="pathway">
    <text evidence="1">Nitrogen metabolism; urea degradation; CO(2) and NH(3) from urea (urease route): step 1/1.</text>
</comment>
<comment type="subunit">
    <text evidence="1">Heterotrimer of UreA (gamma), UreB (beta) and UreC (alpha) subunits. Three heterotrimers associate to form the active enzyme.</text>
</comment>
<comment type="subcellular location">
    <subcellularLocation>
        <location evidence="1">Cytoplasm</location>
    </subcellularLocation>
</comment>
<comment type="similarity">
    <text evidence="1">Belongs to the urease gamma subunit family.</text>
</comment>